<protein>
    <recommendedName>
        <fullName evidence="1">UPF0250 protein Lcho_4239</fullName>
    </recommendedName>
</protein>
<gene>
    <name type="ordered locus">Lcho_4239</name>
</gene>
<reference key="1">
    <citation type="submission" date="2008-03" db="EMBL/GenBank/DDBJ databases">
        <title>Complete sequence of Leptothrix cholodnii SP-6.</title>
        <authorList>
            <consortium name="US DOE Joint Genome Institute"/>
            <person name="Copeland A."/>
            <person name="Lucas S."/>
            <person name="Lapidus A."/>
            <person name="Glavina del Rio T."/>
            <person name="Dalin E."/>
            <person name="Tice H."/>
            <person name="Bruce D."/>
            <person name="Goodwin L."/>
            <person name="Pitluck S."/>
            <person name="Chertkov O."/>
            <person name="Brettin T."/>
            <person name="Detter J.C."/>
            <person name="Han C."/>
            <person name="Kuske C.R."/>
            <person name="Schmutz J."/>
            <person name="Larimer F."/>
            <person name="Land M."/>
            <person name="Hauser L."/>
            <person name="Kyrpides N."/>
            <person name="Lykidis A."/>
            <person name="Emerson D."/>
            <person name="Richardson P."/>
        </authorList>
    </citation>
    <scope>NUCLEOTIDE SEQUENCE [LARGE SCALE GENOMIC DNA]</scope>
    <source>
        <strain>ATCC 51168 / LMG 8142 / SP-6</strain>
    </source>
</reference>
<dbReference type="EMBL" id="CP001013">
    <property type="protein sequence ID" value="ACB36490.1"/>
    <property type="molecule type" value="Genomic_DNA"/>
</dbReference>
<dbReference type="RefSeq" id="WP_012349231.1">
    <property type="nucleotide sequence ID" value="NC_010524.1"/>
</dbReference>
<dbReference type="SMR" id="B1XYQ4"/>
<dbReference type="STRING" id="395495.Lcho_4239"/>
<dbReference type="KEGG" id="lch:Lcho_4239"/>
<dbReference type="eggNOG" id="COG2921">
    <property type="taxonomic scope" value="Bacteria"/>
</dbReference>
<dbReference type="HOGENOM" id="CLU_161438_1_0_4"/>
<dbReference type="OrthoDB" id="9793424at2"/>
<dbReference type="Proteomes" id="UP000001693">
    <property type="component" value="Chromosome"/>
</dbReference>
<dbReference type="Gene3D" id="3.30.70.260">
    <property type="match status" value="1"/>
</dbReference>
<dbReference type="HAMAP" id="MF_00659">
    <property type="entry name" value="UPF0250"/>
    <property type="match status" value="1"/>
</dbReference>
<dbReference type="InterPro" id="IPR007454">
    <property type="entry name" value="UPF0250_YbeD-like"/>
</dbReference>
<dbReference type="InterPro" id="IPR027471">
    <property type="entry name" value="YbeD-like_sf"/>
</dbReference>
<dbReference type="PANTHER" id="PTHR38036">
    <property type="entry name" value="UPF0250 PROTEIN YBED"/>
    <property type="match status" value="1"/>
</dbReference>
<dbReference type="PANTHER" id="PTHR38036:SF1">
    <property type="entry name" value="UPF0250 PROTEIN YBED"/>
    <property type="match status" value="1"/>
</dbReference>
<dbReference type="Pfam" id="PF04359">
    <property type="entry name" value="DUF493"/>
    <property type="match status" value="1"/>
</dbReference>
<dbReference type="SUPFAM" id="SSF117991">
    <property type="entry name" value="YbeD/HP0495-like"/>
    <property type="match status" value="1"/>
</dbReference>
<evidence type="ECO:0000255" key="1">
    <source>
        <dbReference type="HAMAP-Rule" id="MF_00659"/>
    </source>
</evidence>
<comment type="similarity">
    <text evidence="1">Belongs to the UPF0250 family.</text>
</comment>
<name>Y4239_LEPCP</name>
<accession>B1XYQ4</accession>
<sequence>MQDIPREQSLIEYPSAFPIKVMGAHVPGFLEAIVEIALRFDPAFAPDSVEQRPSKAGNYLGLTITVTATSRDQLDALYRELSGHPMVKIVL</sequence>
<feature type="chain" id="PRO_1000131249" description="UPF0250 protein Lcho_4239">
    <location>
        <begin position="1"/>
        <end position="91"/>
    </location>
</feature>
<proteinExistence type="inferred from homology"/>
<keyword id="KW-1185">Reference proteome</keyword>
<organism>
    <name type="scientific">Leptothrix cholodnii (strain ATCC 51168 / LMG 8142 / SP-6)</name>
    <name type="common">Leptothrix discophora (strain SP-6)</name>
    <dbReference type="NCBI Taxonomy" id="395495"/>
    <lineage>
        <taxon>Bacteria</taxon>
        <taxon>Pseudomonadati</taxon>
        <taxon>Pseudomonadota</taxon>
        <taxon>Betaproteobacteria</taxon>
        <taxon>Burkholderiales</taxon>
        <taxon>Sphaerotilaceae</taxon>
        <taxon>Leptothrix</taxon>
    </lineage>
</organism>